<sequence>MGARASVLSGGKLDRWEKIRLRPGGKKKYKLKHIVWASRELERFAVNPGLLETSEGCRQILGQLQPSLQTGSEECRSLYNTVATLYCVHQRIEIKDTKEALDKIKEEQNKSKKKAQQAAADTGHSSQVSQNYPIVQNIQGQMVHQAISPRTLNAWVKVVEEKAFSPEVIPMFSALSEGATPQDLNTMLNTVGGHQAAMQMLKETINEEAAEWDRVHPVHAGPIAPGQMREPRGSDIAGTTSTLQEQIGWMTNNPPIPVGEIYKRWIILGLNKIVRMYSPTSILDIRQGPKEPFRDYVDRFYKTLRAEQASQEVKNWMTETLLVQNANPDCKTILKALGPAATLEEMMTACQGVGGPGHKARVLAEAMSQVTNSATIMMQRGNFRNQRKIVKCFNCGKEGHIARNCRAPRKKGCWKCGKEGHQMKDCTERQANFFREDLAFLQGKAREFSSEQTRANSPTRRELQVWGRDNNSPSEAGADRQGTVSFNFPQITLWQRPLVTIKIGGQLKEALLDTGADDTVLEEMSLPGRWKPKMIGGIGGFIKVRQYDQILIEICGHKAIGTVLVGPTPVNIIGRNLLTQIGCTLNFPISPIETVPVKLKPGMDGPKVKQWPLTEEKIKALVEICTEMEKEGKISKIGPENPYNTPVFAIKKKDSTKWRKLVDFRELNKRTQDFWEVQLGIPHPAGLKKKKSVTVLDVGDAYFSVPLDEDFRKYTAFTIPSINNETPGIRYQYNVLPQGWKGSPAIFQSSMTKILEPFRKQNPDIVIYQYMDDLYVGSDLEIGQHRTKIEELRQHLLRWGLTTPDKKHQKEPPFLWMGYELHPDKWTVQPIVLPEKDSWTVNDIQKLVGKLNWASQIYPGIKVRQLCKLLRGTKALTEVIPLTEEAELELAENREILKEPVHGVYYDPSKDLIAEIQKQGQGQWTYQIYQEPFKNLKTGKYARMRGTHTNDVKQLTEAVQKITTESIVIWGKTPKFKLPIQKETWETWWTEYWQATWIPEWEFVNTPPLVKLWYQLEKEPIVGAETFYVDGAANRETKLGKAGYVTNKGRQKVVPLTNTTNQKTELQAIYLALQDSGLEVNIVTDSQYALGIIQAQPDKSESELVNQIIEQLIKKEKVYLAWVPAHKGIGGNEQVDKLVSAGIRKILFLDGIDKAQDEHEKYHSNWRAMASDFNLPPVVAKEIVASCDKCQLKGEAMHGQVDCSPGIWQLDCTHLEGKVILVAVHVASGYIEAEVIPAETGQETAYFLLKLAGRWPVKTIHTDNGSNFTSATVKAACWWAGIKQEFGIPYNPQSQGVVESMNKELKKIIGQVRDQAEHLKTAVQMAVFIHNFKRKGGIGGYSAGERIVDIIATDIQTKELQKQITKIQNFRVYYRDSRNPLWKGPAKLLWKGEGAVVIQDNSDIKVVPRRKAKIIRDYGKQMAGDDCVASRQDED</sequence>
<organism>
    <name type="scientific">Human immunodeficiency virus type 1 group M subtype B (isolate LW123)</name>
    <name type="common">HIV-1</name>
    <dbReference type="NCBI Taxonomy" id="82834"/>
    <lineage>
        <taxon>Viruses</taxon>
        <taxon>Riboviria</taxon>
        <taxon>Pararnavirae</taxon>
        <taxon>Artverviricota</taxon>
        <taxon>Revtraviricetes</taxon>
        <taxon>Ortervirales</taxon>
        <taxon>Retroviridae</taxon>
        <taxon>Orthoretrovirinae</taxon>
        <taxon>Lentivirus</taxon>
        <taxon>Human immunodeficiency virus type 1</taxon>
    </lineage>
</organism>
<keyword id="KW-0002">3D-structure</keyword>
<keyword id="KW-1073">Activation of host caspases by virus</keyword>
<keyword id="KW-0014">AIDS</keyword>
<keyword id="KW-0064">Aspartyl protease</keyword>
<keyword id="KW-0167">Capsid protein</keyword>
<keyword id="KW-0229">DNA integration</keyword>
<keyword id="KW-0233">DNA recombination</keyword>
<keyword id="KW-0238">DNA-binding</keyword>
<keyword id="KW-0239">DNA-directed DNA polymerase</keyword>
<keyword id="KW-0255">Endonuclease</keyword>
<keyword id="KW-1262">Eukaryotic host gene expression shutoff by virus</keyword>
<keyword id="KW-1193">Eukaryotic host translation shutoff by virus</keyword>
<keyword id="KW-1032">Host cell membrane</keyword>
<keyword id="KW-1035">Host cytoplasm</keyword>
<keyword id="KW-1039">Host endosome</keyword>
<keyword id="KW-1190">Host gene expression shutoff by virus</keyword>
<keyword id="KW-1043">Host membrane</keyword>
<keyword id="KW-1048">Host nucleus</keyword>
<keyword id="KW-0945">Host-virus interaction</keyword>
<keyword id="KW-0378">Hydrolase</keyword>
<keyword id="KW-0446">Lipid-binding</keyword>
<keyword id="KW-0449">Lipoprotein</keyword>
<keyword id="KW-0460">Magnesium</keyword>
<keyword id="KW-0472">Membrane</keyword>
<keyword id="KW-0479">Metal-binding</keyword>
<keyword id="KW-1119">Modulation of host cell apoptosis by virus</keyword>
<keyword id="KW-0511">Multifunctional enzyme</keyword>
<keyword id="KW-0519">Myristate</keyword>
<keyword id="KW-0540">Nuclease</keyword>
<keyword id="KW-0548">Nucleotidyltransferase</keyword>
<keyword id="KW-0597">Phosphoprotein</keyword>
<keyword id="KW-0645">Protease</keyword>
<keyword id="KW-0677">Repeat</keyword>
<keyword id="KW-0688">Ribosomal frameshifting</keyword>
<keyword id="KW-0694">RNA-binding</keyword>
<keyword id="KW-0695">RNA-directed DNA polymerase</keyword>
<keyword id="KW-0808">Transferase</keyword>
<keyword id="KW-1179">Viral genome integration</keyword>
<keyword id="KW-0543">Viral nucleoprotein</keyword>
<keyword id="KW-1163">Viral penetration into host nucleus</keyword>
<keyword id="KW-1188">Viral release from host cell</keyword>
<keyword id="KW-0946">Virion</keyword>
<keyword id="KW-0917">Virion maturation</keyword>
<keyword id="KW-1160">Virus entry into host cell</keyword>
<keyword id="KW-0862">Zinc</keyword>
<keyword id="KW-0863">Zinc-finger</keyword>
<dbReference type="EC" id="3.4.23.16"/>
<dbReference type="EC" id="2.7.7.49"/>
<dbReference type="EC" id="2.7.7.7"/>
<dbReference type="EC" id="3.1.26.13"/>
<dbReference type="EC" id="3.1.13.2"/>
<dbReference type="EC" id="2.7.7.-" evidence="5"/>
<dbReference type="EC" id="3.1.-.-" evidence="5"/>
<dbReference type="EMBL" id="U12055">
    <property type="status" value="NOT_ANNOTATED_CDS"/>
    <property type="molecule type" value="Genomic_RNA"/>
</dbReference>
<dbReference type="PDB" id="3LP3">
    <property type="method" value="X-ray"/>
    <property type="resolution" value="2.80 A"/>
    <property type="chains" value="A/B=1014-1149"/>
</dbReference>
<dbReference type="PDB" id="3TH9">
    <property type="method" value="X-ray"/>
    <property type="resolution" value="1.34 A"/>
    <property type="chains" value="A/B=489-587"/>
</dbReference>
<dbReference type="PDB" id="3VFA">
    <property type="method" value="X-ray"/>
    <property type="resolution" value="1.43 A"/>
    <property type="chains" value="A/B=489-587"/>
</dbReference>
<dbReference type="PDB" id="4I8W">
    <property type="method" value="X-ray"/>
    <property type="resolution" value="1.96 A"/>
    <property type="chains" value="A/B=489-587"/>
</dbReference>
<dbReference type="PDB" id="4I8Z">
    <property type="method" value="X-ray"/>
    <property type="resolution" value="1.75 A"/>
    <property type="chains" value="A/B=489-587"/>
</dbReference>
<dbReference type="PDB" id="4MC1">
    <property type="method" value="X-ray"/>
    <property type="resolution" value="1.39 A"/>
    <property type="chains" value="A/B=489-587"/>
</dbReference>
<dbReference type="PDB" id="4MC2">
    <property type="method" value="X-ray"/>
    <property type="resolution" value="1.56 A"/>
    <property type="chains" value="A/B=489-587"/>
</dbReference>
<dbReference type="PDB" id="4MC6">
    <property type="method" value="X-ray"/>
    <property type="resolution" value="1.31 A"/>
    <property type="chains" value="A/B=489-587"/>
</dbReference>
<dbReference type="PDB" id="4MC9">
    <property type="method" value="X-ray"/>
    <property type="resolution" value="1.19 A"/>
    <property type="chains" value="A/B=489-587"/>
</dbReference>
<dbReference type="PDB" id="4NYF">
    <property type="method" value="X-ray"/>
    <property type="resolution" value="1.90 A"/>
    <property type="chains" value="A/B=1199-1357"/>
</dbReference>
<dbReference type="PDB" id="4QGI">
    <property type="method" value="X-ray"/>
    <property type="resolution" value="1.90 A"/>
    <property type="chains" value="A/B=489-587"/>
</dbReference>
<dbReference type="PDB" id="5K14">
    <property type="method" value="X-ray"/>
    <property type="resolution" value="2.40 A"/>
    <property type="chains" value="B=588-1027"/>
</dbReference>
<dbReference type="PDB" id="6Y9V">
    <property type="method" value="EM"/>
    <property type="resolution" value="6.90 A"/>
    <property type="chains" value="A/B/C/D/G/H/N/Y/d/e/j/k=133-352"/>
</dbReference>
<dbReference type="PDB" id="6Y9W">
    <property type="method" value="EM"/>
    <property type="resolution" value="4.10 A"/>
    <property type="chains" value="A/B/C/D/G/H/N/Y/d/e/j/k=133-352"/>
</dbReference>
<dbReference type="PDB" id="6Y9X">
    <property type="method" value="EM"/>
    <property type="resolution" value="4.40 A"/>
    <property type="chains" value="A/B/C/D/G/H/N/Y/d/e/j/k=133-352"/>
</dbReference>
<dbReference type="PDB" id="6Y9Y">
    <property type="method" value="EM"/>
    <property type="resolution" value="6.10 A"/>
    <property type="chains" value="A/B/C/D/G/H/N/Y/d/e/j/k=133-352"/>
</dbReference>
<dbReference type="PDB" id="6Y9Z">
    <property type="method" value="EM"/>
    <property type="resolution" value="4.80 A"/>
    <property type="chains" value="A/B/C/D/G/H/N/Y/d/e/j/k=133-352"/>
</dbReference>
<dbReference type="PDB" id="9JA0">
    <property type="method" value="EM"/>
    <property type="resolution" value="3.14 A"/>
    <property type="chains" value="A/B/C/D/E/F/G/H/I/J/K/L=133-353"/>
</dbReference>
<dbReference type="PDBsum" id="3LP3"/>
<dbReference type="PDBsum" id="3TH9"/>
<dbReference type="PDBsum" id="3VFA"/>
<dbReference type="PDBsum" id="4I8W"/>
<dbReference type="PDBsum" id="4I8Z"/>
<dbReference type="PDBsum" id="4MC1"/>
<dbReference type="PDBsum" id="4MC2"/>
<dbReference type="PDBsum" id="4MC6"/>
<dbReference type="PDBsum" id="4MC9"/>
<dbReference type="PDBsum" id="4NYF"/>
<dbReference type="PDBsum" id="4QGI"/>
<dbReference type="PDBsum" id="5K14"/>
<dbReference type="PDBsum" id="6Y9V"/>
<dbReference type="PDBsum" id="6Y9W"/>
<dbReference type="PDBsum" id="6Y9X"/>
<dbReference type="PDBsum" id="6Y9Y"/>
<dbReference type="PDBsum" id="6Y9Z"/>
<dbReference type="PDBsum" id="9JA0"/>
<dbReference type="BMRB" id="P0C6F2"/>
<dbReference type="EMDB" id="EMD-10738"/>
<dbReference type="EMDB" id="EMD-10739"/>
<dbReference type="EMDB" id="EMD-10740"/>
<dbReference type="EMDB" id="EMD-10741"/>
<dbReference type="EMDB" id="EMD-10742"/>
<dbReference type="EMDB" id="EMD-61286"/>
<dbReference type="SMR" id="P0C6F2"/>
<dbReference type="BindingDB" id="P0C6F2"/>
<dbReference type="EvolutionaryTrace" id="P0C6F2"/>
<dbReference type="PRO" id="PR:P0C6F2"/>
<dbReference type="Proteomes" id="UP000165413">
    <property type="component" value="Genome"/>
</dbReference>
<dbReference type="GO" id="GO:0043657">
    <property type="term" value="C:host cell"/>
    <property type="evidence" value="ECO:0007669"/>
    <property type="project" value="GOC"/>
</dbReference>
<dbReference type="GO" id="GO:0042025">
    <property type="term" value="C:host cell nucleus"/>
    <property type="evidence" value="ECO:0007669"/>
    <property type="project" value="UniProtKB-SubCell"/>
</dbReference>
<dbReference type="GO" id="GO:0020002">
    <property type="term" value="C:host cell plasma membrane"/>
    <property type="evidence" value="ECO:0007669"/>
    <property type="project" value="UniProtKB-SubCell"/>
</dbReference>
<dbReference type="GO" id="GO:0072494">
    <property type="term" value="C:host multivesicular body"/>
    <property type="evidence" value="ECO:0007669"/>
    <property type="project" value="UniProtKB-SubCell"/>
</dbReference>
<dbReference type="GO" id="GO:0016020">
    <property type="term" value="C:membrane"/>
    <property type="evidence" value="ECO:0007669"/>
    <property type="project" value="UniProtKB-KW"/>
</dbReference>
<dbReference type="GO" id="GO:0019013">
    <property type="term" value="C:viral nucleocapsid"/>
    <property type="evidence" value="ECO:0007669"/>
    <property type="project" value="UniProtKB-KW"/>
</dbReference>
<dbReference type="GO" id="GO:0055036">
    <property type="term" value="C:virion membrane"/>
    <property type="evidence" value="ECO:0007669"/>
    <property type="project" value="UniProtKB-SubCell"/>
</dbReference>
<dbReference type="GO" id="GO:0004190">
    <property type="term" value="F:aspartic-type endopeptidase activity"/>
    <property type="evidence" value="ECO:0007669"/>
    <property type="project" value="UniProtKB-KW"/>
</dbReference>
<dbReference type="GO" id="GO:0003677">
    <property type="term" value="F:DNA binding"/>
    <property type="evidence" value="ECO:0007669"/>
    <property type="project" value="UniProtKB-KW"/>
</dbReference>
<dbReference type="GO" id="GO:0003887">
    <property type="term" value="F:DNA-directed DNA polymerase activity"/>
    <property type="evidence" value="ECO:0007669"/>
    <property type="project" value="UniProtKB-KW"/>
</dbReference>
<dbReference type="GO" id="GO:0004533">
    <property type="term" value="F:exoribonuclease H activity"/>
    <property type="evidence" value="ECO:0007669"/>
    <property type="project" value="UniProtKB-EC"/>
</dbReference>
<dbReference type="GO" id="GO:0008289">
    <property type="term" value="F:lipid binding"/>
    <property type="evidence" value="ECO:0007669"/>
    <property type="project" value="UniProtKB-KW"/>
</dbReference>
<dbReference type="GO" id="GO:0035613">
    <property type="term" value="F:RNA stem-loop binding"/>
    <property type="evidence" value="ECO:0007669"/>
    <property type="project" value="TreeGrafter"/>
</dbReference>
<dbReference type="GO" id="GO:0003964">
    <property type="term" value="F:RNA-directed DNA polymerase activity"/>
    <property type="evidence" value="ECO:0007669"/>
    <property type="project" value="UniProtKB-KW"/>
</dbReference>
<dbReference type="GO" id="GO:0004523">
    <property type="term" value="F:RNA-DNA hybrid ribonuclease activity"/>
    <property type="evidence" value="ECO:0007669"/>
    <property type="project" value="InterPro"/>
</dbReference>
<dbReference type="GO" id="GO:0005198">
    <property type="term" value="F:structural molecule activity"/>
    <property type="evidence" value="ECO:0007669"/>
    <property type="project" value="InterPro"/>
</dbReference>
<dbReference type="GO" id="GO:0008270">
    <property type="term" value="F:zinc ion binding"/>
    <property type="evidence" value="ECO:0007669"/>
    <property type="project" value="UniProtKB-KW"/>
</dbReference>
<dbReference type="GO" id="GO:0015074">
    <property type="term" value="P:DNA integration"/>
    <property type="evidence" value="ECO:0007669"/>
    <property type="project" value="UniProtKB-KW"/>
</dbReference>
<dbReference type="GO" id="GO:0006310">
    <property type="term" value="P:DNA recombination"/>
    <property type="evidence" value="ECO:0007669"/>
    <property type="project" value="UniProtKB-KW"/>
</dbReference>
<dbReference type="GO" id="GO:0075713">
    <property type="term" value="P:establishment of integrated proviral latency"/>
    <property type="evidence" value="ECO:0007669"/>
    <property type="project" value="UniProtKB-KW"/>
</dbReference>
<dbReference type="GO" id="GO:0006508">
    <property type="term" value="P:proteolysis"/>
    <property type="evidence" value="ECO:0007669"/>
    <property type="project" value="UniProtKB-KW"/>
</dbReference>
<dbReference type="GO" id="GO:0046718">
    <property type="term" value="P:symbiont entry into host cell"/>
    <property type="evidence" value="ECO:0007669"/>
    <property type="project" value="UniProtKB-KW"/>
</dbReference>
<dbReference type="GO" id="GO:0052151">
    <property type="term" value="P:symbiont-mediated activation of host apoptosis"/>
    <property type="evidence" value="ECO:0007669"/>
    <property type="project" value="UniProtKB-KW"/>
</dbReference>
<dbReference type="GO" id="GO:0039657">
    <property type="term" value="P:symbiont-mediated suppression of host gene expression"/>
    <property type="evidence" value="ECO:0007669"/>
    <property type="project" value="UniProtKB-KW"/>
</dbReference>
<dbReference type="GO" id="GO:0044826">
    <property type="term" value="P:viral genome integration into host DNA"/>
    <property type="evidence" value="ECO:0007669"/>
    <property type="project" value="UniProtKB-KW"/>
</dbReference>
<dbReference type="GO" id="GO:0075732">
    <property type="term" value="P:viral penetration into host nucleus"/>
    <property type="evidence" value="ECO:0007669"/>
    <property type="project" value="UniProtKB-KW"/>
</dbReference>
<dbReference type="GO" id="GO:0075523">
    <property type="term" value="P:viral translational frameshifting"/>
    <property type="evidence" value="ECO:0007669"/>
    <property type="project" value="UniProtKB-KW"/>
</dbReference>
<dbReference type="CDD" id="cd05482">
    <property type="entry name" value="HIV_retropepsin_like"/>
    <property type="match status" value="1"/>
</dbReference>
<dbReference type="CDD" id="cd01645">
    <property type="entry name" value="RT_Rtv"/>
    <property type="match status" value="1"/>
</dbReference>
<dbReference type="FunFam" id="1.10.1200.30:FF:000001">
    <property type="entry name" value="Gag polyprotein"/>
    <property type="match status" value="1"/>
</dbReference>
<dbReference type="FunFam" id="1.10.150.90:FF:000001">
    <property type="entry name" value="Gag polyprotein"/>
    <property type="match status" value="1"/>
</dbReference>
<dbReference type="FunFam" id="1.10.375.10:FF:000001">
    <property type="entry name" value="Gag polyprotein"/>
    <property type="match status" value="1"/>
</dbReference>
<dbReference type="FunFam" id="1.20.5.760:FF:000001">
    <property type="entry name" value="Gag polyprotein"/>
    <property type="match status" value="1"/>
</dbReference>
<dbReference type="FunFam" id="4.10.60.10:FF:000001">
    <property type="entry name" value="Gag polyprotein"/>
    <property type="match status" value="1"/>
</dbReference>
<dbReference type="FunFam" id="2.40.70.10:FF:000001">
    <property type="entry name" value="Gag-Pol polyprotein"/>
    <property type="match status" value="1"/>
</dbReference>
<dbReference type="FunFam" id="3.30.420.10:FF:000025">
    <property type="entry name" value="Gag-Pol polyprotein"/>
    <property type="match status" value="1"/>
</dbReference>
<dbReference type="FunFam" id="2.30.30.10:FF:000001">
    <property type="entry name" value="POL polyprotein"/>
    <property type="match status" value="1"/>
</dbReference>
<dbReference type="FunFam" id="3.30.420.10:FF:000017">
    <property type="entry name" value="POL polyprotein"/>
    <property type="match status" value="1"/>
</dbReference>
<dbReference type="FunFam" id="3.30.70.270:FF:000016">
    <property type="entry name" value="POL polyprotein"/>
    <property type="match status" value="1"/>
</dbReference>
<dbReference type="Gene3D" id="1.10.10.200">
    <property type="match status" value="1"/>
</dbReference>
<dbReference type="Gene3D" id="1.10.1200.30">
    <property type="match status" value="1"/>
</dbReference>
<dbReference type="Gene3D" id="3.30.70.270">
    <property type="match status" value="3"/>
</dbReference>
<dbReference type="Gene3D" id="2.40.70.10">
    <property type="entry name" value="Acid Proteases"/>
    <property type="match status" value="1"/>
</dbReference>
<dbReference type="Gene3D" id="3.10.10.10">
    <property type="entry name" value="HIV Type 1 Reverse Transcriptase, subunit A, domain 1"/>
    <property type="match status" value="1"/>
</dbReference>
<dbReference type="Gene3D" id="1.10.375.10">
    <property type="entry name" value="Human Immunodeficiency Virus Type 1 Capsid Protein"/>
    <property type="match status" value="1"/>
</dbReference>
<dbReference type="Gene3D" id="1.10.150.90">
    <property type="entry name" value="Immunodeficiency lentiviruses, gag gene matrix protein p17"/>
    <property type="match status" value="1"/>
</dbReference>
<dbReference type="Gene3D" id="2.30.30.10">
    <property type="entry name" value="Integrase, C-terminal domain superfamily, retroviral"/>
    <property type="match status" value="1"/>
</dbReference>
<dbReference type="Gene3D" id="3.30.420.10">
    <property type="entry name" value="Ribonuclease H-like superfamily/Ribonuclease H"/>
    <property type="match status" value="2"/>
</dbReference>
<dbReference type="Gene3D" id="1.20.5.760">
    <property type="entry name" value="Single helix bin"/>
    <property type="match status" value="1"/>
</dbReference>
<dbReference type="Gene3D" id="4.10.60.10">
    <property type="entry name" value="Zinc finger, CCHC-type"/>
    <property type="match status" value="1"/>
</dbReference>
<dbReference type="InterPro" id="IPR001969">
    <property type="entry name" value="Aspartic_peptidase_AS"/>
</dbReference>
<dbReference type="InterPro" id="IPR043502">
    <property type="entry name" value="DNA/RNA_pol_sf"/>
</dbReference>
<dbReference type="InterPro" id="IPR045345">
    <property type="entry name" value="Gag_p24_C"/>
</dbReference>
<dbReference type="InterPro" id="IPR017856">
    <property type="entry name" value="Integrase-like_N"/>
</dbReference>
<dbReference type="InterPro" id="IPR036862">
    <property type="entry name" value="Integrase_C_dom_sf_retrovir"/>
</dbReference>
<dbReference type="InterPro" id="IPR001037">
    <property type="entry name" value="Integrase_C_retrovir"/>
</dbReference>
<dbReference type="InterPro" id="IPR001584">
    <property type="entry name" value="Integrase_cat-core"/>
</dbReference>
<dbReference type="InterPro" id="IPR003308">
    <property type="entry name" value="Integrase_Zn-bd_dom_N"/>
</dbReference>
<dbReference type="InterPro" id="IPR000071">
    <property type="entry name" value="Lentvrl_matrix_N"/>
</dbReference>
<dbReference type="InterPro" id="IPR012344">
    <property type="entry name" value="Matrix_HIV/RSV_N"/>
</dbReference>
<dbReference type="InterPro" id="IPR001995">
    <property type="entry name" value="Peptidase_A2_cat"/>
</dbReference>
<dbReference type="InterPro" id="IPR021109">
    <property type="entry name" value="Peptidase_aspartic_dom_sf"/>
</dbReference>
<dbReference type="InterPro" id="IPR034170">
    <property type="entry name" value="Retropepsin-like_cat_dom"/>
</dbReference>
<dbReference type="InterPro" id="IPR018061">
    <property type="entry name" value="Retropepsins"/>
</dbReference>
<dbReference type="InterPro" id="IPR008916">
    <property type="entry name" value="Retrov_capsid_C"/>
</dbReference>
<dbReference type="InterPro" id="IPR008919">
    <property type="entry name" value="Retrov_capsid_N"/>
</dbReference>
<dbReference type="InterPro" id="IPR010999">
    <property type="entry name" value="Retrovr_matrix"/>
</dbReference>
<dbReference type="InterPro" id="IPR043128">
    <property type="entry name" value="Rev_trsase/Diguanyl_cyclase"/>
</dbReference>
<dbReference type="InterPro" id="IPR012337">
    <property type="entry name" value="RNaseH-like_sf"/>
</dbReference>
<dbReference type="InterPro" id="IPR002156">
    <property type="entry name" value="RNaseH_domain"/>
</dbReference>
<dbReference type="InterPro" id="IPR036397">
    <property type="entry name" value="RNaseH_sf"/>
</dbReference>
<dbReference type="InterPro" id="IPR000477">
    <property type="entry name" value="RT_dom"/>
</dbReference>
<dbReference type="InterPro" id="IPR010659">
    <property type="entry name" value="RVT_connect"/>
</dbReference>
<dbReference type="InterPro" id="IPR010661">
    <property type="entry name" value="RVT_thumb"/>
</dbReference>
<dbReference type="InterPro" id="IPR001878">
    <property type="entry name" value="Znf_CCHC"/>
</dbReference>
<dbReference type="InterPro" id="IPR036875">
    <property type="entry name" value="Znf_CCHC_sf"/>
</dbReference>
<dbReference type="PANTHER" id="PTHR41694">
    <property type="entry name" value="ENDOGENOUS RETROVIRUS GROUP K MEMBER POL PROTEIN"/>
    <property type="match status" value="1"/>
</dbReference>
<dbReference type="PANTHER" id="PTHR41694:SF3">
    <property type="entry name" value="RNA-DIRECTED DNA POLYMERASE-RELATED"/>
    <property type="match status" value="1"/>
</dbReference>
<dbReference type="Pfam" id="PF00540">
    <property type="entry name" value="Gag_p17"/>
    <property type="match status" value="1"/>
</dbReference>
<dbReference type="Pfam" id="PF19317">
    <property type="entry name" value="Gag_p24_C"/>
    <property type="match status" value="1"/>
</dbReference>
<dbReference type="Pfam" id="PF00552">
    <property type="entry name" value="IN_DBD_C"/>
    <property type="match status" value="1"/>
</dbReference>
<dbReference type="Pfam" id="PF02022">
    <property type="entry name" value="Integrase_Zn"/>
    <property type="match status" value="1"/>
</dbReference>
<dbReference type="Pfam" id="PF00075">
    <property type="entry name" value="RNase_H"/>
    <property type="match status" value="1"/>
</dbReference>
<dbReference type="Pfam" id="PF00665">
    <property type="entry name" value="rve"/>
    <property type="match status" value="1"/>
</dbReference>
<dbReference type="Pfam" id="PF00077">
    <property type="entry name" value="RVP"/>
    <property type="match status" value="1"/>
</dbReference>
<dbReference type="Pfam" id="PF00078">
    <property type="entry name" value="RVT_1"/>
    <property type="match status" value="1"/>
</dbReference>
<dbReference type="Pfam" id="PF06815">
    <property type="entry name" value="RVT_connect"/>
    <property type="match status" value="1"/>
</dbReference>
<dbReference type="Pfam" id="PF06817">
    <property type="entry name" value="RVT_thumb"/>
    <property type="match status" value="1"/>
</dbReference>
<dbReference type="Pfam" id="PF00098">
    <property type="entry name" value="zf-CCHC"/>
    <property type="match status" value="2"/>
</dbReference>
<dbReference type="PRINTS" id="PR00234">
    <property type="entry name" value="HIV1MATRIX"/>
</dbReference>
<dbReference type="SMART" id="SM00343">
    <property type="entry name" value="ZnF_C2HC"/>
    <property type="match status" value="2"/>
</dbReference>
<dbReference type="SUPFAM" id="SSF50630">
    <property type="entry name" value="Acid proteases"/>
    <property type="match status" value="1"/>
</dbReference>
<dbReference type="SUPFAM" id="SSF50122">
    <property type="entry name" value="DNA-binding domain of retroviral integrase"/>
    <property type="match status" value="1"/>
</dbReference>
<dbReference type="SUPFAM" id="SSF56672">
    <property type="entry name" value="DNA/RNA polymerases"/>
    <property type="match status" value="1"/>
</dbReference>
<dbReference type="SUPFAM" id="SSF46919">
    <property type="entry name" value="N-terminal Zn binding domain of HIV integrase"/>
    <property type="match status" value="1"/>
</dbReference>
<dbReference type="SUPFAM" id="SSF47836">
    <property type="entry name" value="Retroviral matrix proteins"/>
    <property type="match status" value="1"/>
</dbReference>
<dbReference type="SUPFAM" id="SSF47353">
    <property type="entry name" value="Retrovirus capsid dimerization domain-like"/>
    <property type="match status" value="1"/>
</dbReference>
<dbReference type="SUPFAM" id="SSF47943">
    <property type="entry name" value="Retrovirus capsid protein, N-terminal core domain"/>
    <property type="match status" value="1"/>
</dbReference>
<dbReference type="SUPFAM" id="SSF57756">
    <property type="entry name" value="Retrovirus zinc finger-like domains"/>
    <property type="match status" value="1"/>
</dbReference>
<dbReference type="SUPFAM" id="SSF53098">
    <property type="entry name" value="Ribonuclease H-like"/>
    <property type="match status" value="2"/>
</dbReference>
<dbReference type="PROSITE" id="PS50175">
    <property type="entry name" value="ASP_PROT_RETROV"/>
    <property type="match status" value="1"/>
</dbReference>
<dbReference type="PROSITE" id="PS00141">
    <property type="entry name" value="ASP_PROTEASE"/>
    <property type="match status" value="1"/>
</dbReference>
<dbReference type="PROSITE" id="PS50994">
    <property type="entry name" value="INTEGRASE"/>
    <property type="match status" value="1"/>
</dbReference>
<dbReference type="PROSITE" id="PS51027">
    <property type="entry name" value="INTEGRASE_DBD"/>
    <property type="match status" value="1"/>
</dbReference>
<dbReference type="PROSITE" id="PS50879">
    <property type="entry name" value="RNASE_H_1"/>
    <property type="match status" value="1"/>
</dbReference>
<dbReference type="PROSITE" id="PS50878">
    <property type="entry name" value="RT_POL"/>
    <property type="match status" value="1"/>
</dbReference>
<dbReference type="PROSITE" id="PS50158">
    <property type="entry name" value="ZF_CCHC"/>
    <property type="match status" value="2"/>
</dbReference>
<dbReference type="PROSITE" id="PS50876">
    <property type="entry name" value="ZF_INTEGRASE"/>
    <property type="match status" value="1"/>
</dbReference>
<reference key="1">
    <citation type="journal article" date="1994" name="AIDS Res. Hum. Retroviruses">
        <title>Viral variability and serum antibody response in a laboratory worker infected with HIV type 1 (HTLV type IIIB).</title>
        <authorList>
            <person name="Reitz M.S. Jr."/>
            <person name="Hall L."/>
            <person name="Robert-Guroff M."/>
            <person name="Lautenberger J.A."/>
            <person name="Hahn B.M."/>
            <person name="Shaw G.M."/>
            <person name="Kong L.I."/>
            <person name="Weiss S.H."/>
            <person name="Waters D."/>
            <person name="Gallo R.C."/>
            <person name="Blattner W."/>
        </authorList>
    </citation>
    <scope>NUCLEOTIDE SEQUENCE [GENOMIC RNA]</scope>
</reference>
<reference evidence="20" key="2">
    <citation type="journal article" date="2010" name="J. Virol.">
        <title>Structural basis for the inhibition of RNase H activity of HIV-1 reverse transcriptase by RNase H active site-directed inhibitors.</title>
        <authorList>
            <person name="Su H.P."/>
            <person name="Yan Y."/>
            <person name="Prasad G.S."/>
            <person name="Smith R.F."/>
            <person name="Daniels C.L."/>
            <person name="Abeywickrema P.D."/>
            <person name="Reid J.C."/>
            <person name="Loughran H.M."/>
            <person name="Kornienko M."/>
            <person name="Sharma S."/>
            <person name="Grobler J.A."/>
            <person name="Xu B."/>
            <person name="Sardana V."/>
            <person name="Allison T.J."/>
            <person name="Williams P.D."/>
            <person name="Darke P.L."/>
            <person name="Hazuda D.J."/>
            <person name="Munshi S."/>
        </authorList>
    </citation>
    <scope>X-RAY CRYSTALLOGRAPHY (2.80 ANGSTROMS) OF 1014-1149 IN COMPLEX WITH MANGANESE</scope>
</reference>
<reference evidence="21" key="3">
    <citation type="journal article" date="2011" name="J. Med. Chem.">
        <title>Design, synthesis, and X-ray crystallographic analysis of a novel class of HIV-1 protease inhibitors.</title>
        <authorList>
            <person name="Ganguly A.K."/>
            <person name="Alluri S.S."/>
            <person name="Caroccia D."/>
            <person name="Biswas D."/>
            <person name="Wang C.H."/>
            <person name="Kang E."/>
            <person name="Zhang Y."/>
            <person name="McPhail A.T."/>
            <person name="Carroll S.S."/>
            <person name="Burlein C."/>
            <person name="Munshi V."/>
            <person name="Orth P."/>
            <person name="Strickland C."/>
        </authorList>
    </citation>
    <scope>X-RAY CRYSTALLOGRAPHY (1.34 ANGSTROMS) OF 489-587</scope>
</reference>
<name>POL_HV1LW</name>
<accession>P0C6F2</accession>
<proteinExistence type="evidence at protein level"/>
<organismHost>
    <name type="scientific">Homo sapiens</name>
    <name type="common">Human</name>
    <dbReference type="NCBI Taxonomy" id="9606"/>
</organismHost>
<feature type="initiator methionine" description="Removed; by host" evidence="1">
    <location>
        <position position="1"/>
    </location>
</feature>
<feature type="chain" id="PRO_0000325028" description="Gag-Pol polyprotein" evidence="1">
    <location>
        <begin position="2"/>
        <end position="1435"/>
    </location>
</feature>
<feature type="chain" id="PRO_0000325029" description="Matrix protein p17" evidence="1">
    <location>
        <begin position="2"/>
        <end position="132"/>
    </location>
</feature>
<feature type="chain" id="PRO_0000325030" description="Capsid protein p24" evidence="1">
    <location>
        <begin position="133"/>
        <end position="363"/>
    </location>
</feature>
<feature type="peptide" id="PRO_0000325031" description="Spacer peptide 1" evidence="1">
    <location>
        <begin position="364"/>
        <end position="377"/>
    </location>
</feature>
<feature type="chain" id="PRO_0000325032" description="Nucleocapsid protein p7" evidence="1">
    <location>
        <begin position="378"/>
        <end position="432"/>
    </location>
</feature>
<feature type="peptide" id="PRO_0000325033" description="Transframe peptide" evidence="8">
    <location>
        <begin position="433"/>
        <end position="440"/>
    </location>
</feature>
<feature type="chain" id="PRO_0000325034" description="p6-pol" evidence="8">
    <location>
        <begin position="441"/>
        <end position="488"/>
    </location>
</feature>
<feature type="chain" id="PRO_0000325035" description="Protease" evidence="1">
    <location>
        <begin position="489"/>
        <end position="587"/>
    </location>
</feature>
<feature type="chain" id="PRO_0000325036" description="Reverse transcriptase/ribonuclease H" evidence="1">
    <location>
        <begin position="588"/>
        <end position="1147"/>
    </location>
</feature>
<feature type="chain" id="PRO_0000325037" description="p51 RT" evidence="1">
    <location>
        <begin position="588"/>
        <end position="1027"/>
    </location>
</feature>
<feature type="chain" id="PRO_0000325038" description="p15" evidence="1">
    <location>
        <begin position="1028"/>
        <end position="1147"/>
    </location>
</feature>
<feature type="chain" id="PRO_0000325039" description="Integrase" evidence="1">
    <location>
        <begin position="1148"/>
        <end position="1435"/>
    </location>
</feature>
<feature type="domain" description="Peptidase A2" evidence="10">
    <location>
        <begin position="508"/>
        <end position="577"/>
    </location>
</feature>
<feature type="domain" description="Reverse transcriptase" evidence="11">
    <location>
        <begin position="631"/>
        <end position="821"/>
    </location>
</feature>
<feature type="domain" description="RNase H type-1" evidence="12">
    <location>
        <begin position="1021"/>
        <end position="1144"/>
    </location>
</feature>
<feature type="domain" description="Integrase catalytic" evidence="14">
    <location>
        <begin position="1201"/>
        <end position="1351"/>
    </location>
</feature>
<feature type="zinc finger region" description="CCHC-type 1" evidence="9">
    <location>
        <begin position="390"/>
        <end position="407"/>
    </location>
</feature>
<feature type="zinc finger region" description="CCHC-type 2" evidence="9">
    <location>
        <begin position="411"/>
        <end position="428"/>
    </location>
</feature>
<feature type="zinc finger region" description="Integrase-type" evidence="13">
    <location>
        <begin position="1150"/>
        <end position="1191"/>
    </location>
</feature>
<feature type="DNA-binding region" description="Integrase-type" evidence="15">
    <location>
        <begin position="1370"/>
        <end position="1417"/>
    </location>
</feature>
<feature type="region of interest" description="Interaction with Gp41" evidence="7">
    <location>
        <begin position="7"/>
        <end position="31"/>
    </location>
</feature>
<feature type="region of interest" description="Interaction with host CALM1" evidence="5">
    <location>
        <begin position="8"/>
        <end position="43"/>
    </location>
</feature>
<feature type="region of interest" description="Interaction with host AP3D1" evidence="7">
    <location>
        <begin position="12"/>
        <end position="19"/>
    </location>
</feature>
<feature type="region of interest" description="Interaction with membrane phosphatidylinositol 4,5-bisphosphate and RNA" evidence="7">
    <location>
        <begin position="14"/>
        <end position="33"/>
    </location>
</feature>
<feature type="region of interest" description="Interaction with membrane phosphatidylinositol 4,5-bisphosphate" evidence="7">
    <location>
        <begin position="73"/>
        <end position="77"/>
    </location>
</feature>
<feature type="region of interest" description="Disordered" evidence="17">
    <location>
        <begin position="107"/>
        <end position="128"/>
    </location>
</feature>
<feature type="region of interest" description="Interaction with human PPIA/CYPA and NUP153" evidence="7">
    <location>
        <begin position="189"/>
        <end position="227"/>
    </location>
</feature>
<feature type="region of interest" description="Dimerization/Multimerization of capsid protein p24" evidence="5">
    <location>
        <begin position="277"/>
        <end position="363"/>
    </location>
</feature>
<feature type="region of interest" description="Disordered" evidence="17">
    <location>
        <begin position="449"/>
        <end position="481"/>
    </location>
</feature>
<feature type="region of interest" description="Dimerization of protease" evidence="5">
    <location>
        <begin position="489"/>
        <end position="493"/>
    </location>
</feature>
<feature type="region of interest" description="Dimerization of protease" evidence="5">
    <location>
        <begin position="537"/>
        <end position="543"/>
    </location>
</feature>
<feature type="region of interest" description="Dimerization of protease" evidence="5">
    <location>
        <begin position="576"/>
        <end position="588"/>
    </location>
</feature>
<feature type="region of interest" description="RT 'primer grip'" evidence="1">
    <location>
        <begin position="814"/>
        <end position="822"/>
    </location>
</feature>
<feature type="short sequence motif" description="Nuclear export signal" evidence="1">
    <location>
        <begin position="16"/>
        <end position="22"/>
    </location>
</feature>
<feature type="short sequence motif" description="Nuclear localization signal" evidence="1">
    <location>
        <begin position="26"/>
        <end position="32"/>
    </location>
</feature>
<feature type="short sequence motif" description="Tryptophan repeat motif" evidence="1">
    <location>
        <begin position="985"/>
        <end position="1001"/>
    </location>
</feature>
<feature type="active site" description="For protease activity; shared with dimeric partner" evidence="16">
    <location>
        <position position="513"/>
    </location>
</feature>
<feature type="binding site" evidence="1">
    <location>
        <position position="697"/>
    </location>
    <ligand>
        <name>Mg(2+)</name>
        <dbReference type="ChEBI" id="CHEBI:18420"/>
        <label>1</label>
        <note>catalytic; for reverse transcriptase activity</note>
    </ligand>
</feature>
<feature type="binding site" evidence="1">
    <location>
        <position position="772"/>
    </location>
    <ligand>
        <name>Mg(2+)</name>
        <dbReference type="ChEBI" id="CHEBI:18420"/>
        <label>1</label>
        <note>catalytic; for reverse transcriptase activity</note>
    </ligand>
</feature>
<feature type="binding site" evidence="1">
    <location>
        <position position="773"/>
    </location>
    <ligand>
        <name>Mg(2+)</name>
        <dbReference type="ChEBI" id="CHEBI:18420"/>
        <label>1</label>
        <note>catalytic; for reverse transcriptase activity</note>
    </ligand>
</feature>
<feature type="binding site" evidence="19">
    <location>
        <position position="1030"/>
    </location>
    <ligand>
        <name>Mg(2+)</name>
        <dbReference type="ChEBI" id="CHEBI:18420"/>
        <label>2</label>
        <note>catalytic; for RNase H activity</note>
    </ligand>
</feature>
<feature type="binding site" evidence="19">
    <location>
        <position position="1065"/>
    </location>
    <ligand>
        <name>Mg(2+)</name>
        <dbReference type="ChEBI" id="CHEBI:18420"/>
        <label>2</label>
        <note>catalytic; for RNase H activity</note>
    </ligand>
</feature>
<feature type="binding site" evidence="19">
    <location>
        <position position="1085"/>
    </location>
    <ligand>
        <name>Mg(2+)</name>
        <dbReference type="ChEBI" id="CHEBI:18420"/>
        <label>2</label>
        <note>catalytic; for RNase H activity</note>
    </ligand>
</feature>
<feature type="binding site" evidence="1">
    <location>
        <position position="1136"/>
    </location>
    <ligand>
        <name>Mg(2+)</name>
        <dbReference type="ChEBI" id="CHEBI:18420"/>
        <label>2</label>
        <note>catalytic; for RNase H activity</note>
    </ligand>
</feature>
<feature type="binding site" evidence="13">
    <location>
        <position position="1159"/>
    </location>
    <ligand>
        <name>Zn(2+)</name>
        <dbReference type="ChEBI" id="CHEBI:29105"/>
    </ligand>
</feature>
<feature type="binding site" evidence="13">
    <location>
        <position position="1163"/>
    </location>
    <ligand>
        <name>Zn(2+)</name>
        <dbReference type="ChEBI" id="CHEBI:29105"/>
    </ligand>
</feature>
<feature type="binding site" evidence="13">
    <location>
        <position position="1187"/>
    </location>
    <ligand>
        <name>Zn(2+)</name>
        <dbReference type="ChEBI" id="CHEBI:29105"/>
    </ligand>
</feature>
<feature type="binding site" evidence="13">
    <location>
        <position position="1190"/>
    </location>
    <ligand>
        <name>Zn(2+)</name>
        <dbReference type="ChEBI" id="CHEBI:29105"/>
    </ligand>
</feature>
<feature type="binding site" evidence="1">
    <location>
        <position position="1211"/>
    </location>
    <ligand>
        <name>Mg(2+)</name>
        <dbReference type="ChEBI" id="CHEBI:18420"/>
        <label>3</label>
        <note>catalytic; for integrase activity</note>
    </ligand>
</feature>
<feature type="binding site" evidence="1">
    <location>
        <position position="1263"/>
    </location>
    <ligand>
        <name>Mg(2+)</name>
        <dbReference type="ChEBI" id="CHEBI:18420"/>
        <label>3</label>
        <note>catalytic; for integrase activity</note>
    </ligand>
</feature>
<feature type="binding site" evidence="5">
    <location>
        <position position="1299"/>
    </location>
    <ligand>
        <name>Mg(2+)</name>
        <dbReference type="ChEBI" id="CHEBI:18420"/>
        <label>3</label>
        <note>catalytic; for integrase activity</note>
    </ligand>
</feature>
<feature type="site" description="Cleavage; by viral protease" evidence="1">
    <location>
        <begin position="132"/>
        <end position="133"/>
    </location>
</feature>
<feature type="site" description="Cis/trans isomerization of proline peptide bond; by human PPIA/CYPA" evidence="1">
    <location>
        <begin position="221"/>
        <end position="222"/>
    </location>
</feature>
<feature type="site" description="Cleavage; by viral protease" evidence="1">
    <location>
        <begin position="363"/>
        <end position="364"/>
    </location>
</feature>
<feature type="site" description="Cleavage; by viral protease" evidence="1">
    <location>
        <begin position="377"/>
        <end position="378"/>
    </location>
</feature>
<feature type="site" description="Cleavage; by viral protease" evidence="8">
    <location>
        <begin position="432"/>
        <end position="433"/>
    </location>
</feature>
<feature type="site" description="Cleavage; by viral protease" evidence="1">
    <location>
        <begin position="440"/>
        <end position="441"/>
    </location>
</feature>
<feature type="site" description="Cleavage; by viral protease" evidence="1">
    <location>
        <begin position="488"/>
        <end position="489"/>
    </location>
</feature>
<feature type="site" description="Cleavage; by viral protease" evidence="1">
    <location>
        <begin position="587"/>
        <end position="588"/>
    </location>
</feature>
<feature type="site" description="Essential for RT p66/p51 heterodimerization" evidence="1">
    <location>
        <position position="988"/>
    </location>
</feature>
<feature type="site" description="Essential for RT p66/p51 heterodimerization" evidence="1">
    <location>
        <position position="1001"/>
    </location>
</feature>
<feature type="site" description="Cleavage; by viral protease; partial" evidence="8">
    <location>
        <begin position="1027"/>
        <end position="1028"/>
    </location>
</feature>
<feature type="site" description="Cleavage; by viral protease" evidence="1">
    <location>
        <begin position="1147"/>
        <end position="1148"/>
    </location>
</feature>
<feature type="modified residue" description="Phosphotyrosine; by host" evidence="1">
    <location>
        <position position="132"/>
    </location>
</feature>
<feature type="lipid moiety-binding region" description="N-myristoyl glycine; by host" evidence="1">
    <location>
        <position position="2"/>
    </location>
</feature>
<feature type="strand" evidence="27">
    <location>
        <begin position="134"/>
        <end position="136"/>
    </location>
</feature>
<feature type="strand" evidence="27">
    <location>
        <begin position="142"/>
        <end position="144"/>
    </location>
</feature>
<feature type="helix" evidence="27">
    <location>
        <begin position="149"/>
        <end position="161"/>
    </location>
</feature>
<feature type="strand" evidence="27">
    <location>
        <begin position="162"/>
        <end position="164"/>
    </location>
</feature>
<feature type="helix" evidence="27">
    <location>
        <begin position="168"/>
        <end position="175"/>
    </location>
</feature>
<feature type="strand" evidence="27">
    <location>
        <begin position="176"/>
        <end position="178"/>
    </location>
</feature>
<feature type="helix" evidence="27">
    <location>
        <begin position="181"/>
        <end position="189"/>
    </location>
</feature>
<feature type="helix" evidence="27">
    <location>
        <begin position="195"/>
        <end position="215"/>
    </location>
</feature>
<feature type="helix" evidence="27">
    <location>
        <begin position="233"/>
        <end position="236"/>
    </location>
</feature>
<feature type="helix" evidence="27">
    <location>
        <begin position="243"/>
        <end position="251"/>
    </location>
</feature>
<feature type="strand" evidence="27">
    <location>
        <begin position="252"/>
        <end position="254"/>
    </location>
</feature>
<feature type="helix" evidence="27">
    <location>
        <begin position="258"/>
        <end position="276"/>
    </location>
</feature>
<feature type="helix" evidence="27">
    <location>
        <begin position="282"/>
        <end position="284"/>
    </location>
</feature>
<feature type="helix" evidence="27">
    <location>
        <begin position="293"/>
        <end position="306"/>
    </location>
</feature>
<feature type="helix" evidence="27">
    <location>
        <begin position="311"/>
        <end position="320"/>
    </location>
</feature>
<feature type="turn" evidence="27">
    <location>
        <begin position="321"/>
        <end position="325"/>
    </location>
</feature>
<feature type="helix" evidence="27">
    <location>
        <begin position="328"/>
        <end position="335"/>
    </location>
</feature>
<feature type="helix" evidence="27">
    <location>
        <begin position="343"/>
        <end position="347"/>
    </location>
</feature>
<feature type="turn" evidence="27">
    <location>
        <begin position="348"/>
        <end position="350"/>
    </location>
</feature>
<feature type="strand" evidence="24">
    <location>
        <begin position="493"/>
        <end position="495"/>
    </location>
</feature>
<feature type="strand" evidence="24">
    <location>
        <begin position="498"/>
        <end position="503"/>
    </location>
</feature>
<feature type="strand" evidence="24">
    <location>
        <begin position="506"/>
        <end position="512"/>
    </location>
</feature>
<feature type="strand" evidence="23">
    <location>
        <begin position="517"/>
        <end position="521"/>
    </location>
</feature>
<feature type="strand" evidence="24">
    <location>
        <begin position="530"/>
        <end position="537"/>
    </location>
</feature>
<feature type="strand" evidence="24">
    <location>
        <begin position="540"/>
        <end position="554"/>
    </location>
</feature>
<feature type="strand" evidence="24">
    <location>
        <begin position="557"/>
        <end position="566"/>
    </location>
</feature>
<feature type="helix" evidence="24">
    <location>
        <begin position="575"/>
        <end position="578"/>
    </location>
</feature>
<feature type="turn" evidence="24">
    <location>
        <begin position="579"/>
        <end position="582"/>
    </location>
</feature>
<feature type="strand" evidence="24">
    <location>
        <begin position="584"/>
        <end position="586"/>
    </location>
</feature>
<feature type="helix" evidence="26">
    <location>
        <begin position="615"/>
        <end position="630"/>
    </location>
</feature>
<feature type="strand" evidence="26">
    <location>
        <begin position="633"/>
        <end position="636"/>
    </location>
</feature>
<feature type="strand" evidence="26">
    <location>
        <begin position="647"/>
        <end position="650"/>
    </location>
</feature>
<feature type="strand" evidence="26">
    <location>
        <begin position="659"/>
        <end position="662"/>
    </location>
</feature>
<feature type="helix" evidence="26">
    <location>
        <begin position="665"/>
        <end position="676"/>
    </location>
</feature>
<feature type="helix" evidence="26">
    <location>
        <begin position="687"/>
        <end position="689"/>
    </location>
</feature>
<feature type="strand" evidence="26">
    <location>
        <begin position="690"/>
        <end position="697"/>
    </location>
</feature>
<feature type="helix" evidence="26">
    <location>
        <begin position="699"/>
        <end position="704"/>
    </location>
</feature>
<feature type="turn" evidence="26">
    <location>
        <begin position="709"/>
        <end position="711"/>
    </location>
</feature>
<feature type="helix" evidence="26">
    <location>
        <begin position="712"/>
        <end position="715"/>
    </location>
</feature>
<feature type="strand" evidence="26">
    <location>
        <begin position="717"/>
        <end position="719"/>
    </location>
</feature>
<feature type="helix" evidence="26">
    <location>
        <begin position="722"/>
        <end position="724"/>
    </location>
</feature>
<feature type="strand" evidence="26">
    <location>
        <begin position="729"/>
        <end position="735"/>
    </location>
</feature>
<feature type="helix" evidence="26">
    <location>
        <begin position="742"/>
        <end position="761"/>
    </location>
</feature>
<feature type="strand" evidence="26">
    <location>
        <begin position="766"/>
        <end position="770"/>
    </location>
</feature>
<feature type="strand" evidence="26">
    <location>
        <begin position="773"/>
        <end position="778"/>
    </location>
</feature>
<feature type="helix" evidence="26">
    <location>
        <begin position="782"/>
        <end position="797"/>
    </location>
</feature>
<feature type="turn" evidence="26">
    <location>
        <begin position="798"/>
        <end position="800"/>
    </location>
</feature>
<feature type="turn" evidence="26">
    <location>
        <begin position="823"/>
        <end position="825"/>
    </location>
</feature>
<feature type="helix" evidence="26">
    <location>
        <begin position="841"/>
        <end position="854"/>
    </location>
</feature>
<feature type="turn" evidence="26">
    <location>
        <begin position="855"/>
        <end position="857"/>
    </location>
</feature>
<feature type="helix" evidence="26">
    <location>
        <begin position="864"/>
        <end position="867"/>
    </location>
</feature>
<feature type="turn" evidence="26">
    <location>
        <begin position="868"/>
        <end position="870"/>
    </location>
</feature>
<feature type="helix" evidence="26">
    <location>
        <begin position="884"/>
        <end position="896"/>
    </location>
</feature>
<feature type="strand" evidence="26">
    <location>
        <begin position="913"/>
        <end position="920"/>
    </location>
</feature>
<feature type="strand" evidence="26">
    <location>
        <begin position="923"/>
        <end position="931"/>
    </location>
</feature>
<feature type="strand" evidence="26">
    <location>
        <begin position="935"/>
        <end position="941"/>
    </location>
</feature>
<feature type="helix" evidence="26">
    <location>
        <begin position="951"/>
        <end position="970"/>
    </location>
</feature>
<feature type="strand" evidence="26">
    <location>
        <begin position="975"/>
        <end position="978"/>
    </location>
</feature>
<feature type="helix" evidence="26">
    <location>
        <begin position="982"/>
        <end position="988"/>
    </location>
</feature>
<feature type="helix" evidence="26">
    <location>
        <begin position="989"/>
        <end position="991"/>
    </location>
</feature>
<feature type="strand" evidence="26">
    <location>
        <begin position="1001"/>
        <end position="1003"/>
    </location>
</feature>
<feature type="helix" evidence="26">
    <location>
        <begin position="1008"/>
        <end position="1012"/>
    </location>
</feature>
<feature type="strand" evidence="22">
    <location>
        <begin position="1025"/>
        <end position="1033"/>
    </location>
</feature>
<feature type="turn" evidence="22">
    <location>
        <begin position="1035"/>
        <end position="1037"/>
    </location>
</feature>
<feature type="strand" evidence="22">
    <location>
        <begin position="1040"/>
        <end position="1046"/>
    </location>
</feature>
<feature type="strand" evidence="22">
    <location>
        <begin position="1051"/>
        <end position="1058"/>
    </location>
</feature>
<feature type="helix" evidence="22">
    <location>
        <begin position="1061"/>
        <end position="1074"/>
    </location>
</feature>
<feature type="strand" evidence="22">
    <location>
        <begin position="1078"/>
        <end position="1084"/>
    </location>
</feature>
<feature type="helix" evidence="22">
    <location>
        <begin position="1087"/>
        <end position="1094"/>
    </location>
</feature>
<feature type="helix" evidence="22">
    <location>
        <begin position="1103"/>
        <end position="1113"/>
    </location>
</feature>
<feature type="strand" evidence="22">
    <location>
        <begin position="1116"/>
        <end position="1122"/>
    </location>
</feature>
<feature type="helix" evidence="22">
    <location>
        <begin position="1130"/>
        <end position="1140"/>
    </location>
</feature>
<feature type="strand" evidence="25">
    <location>
        <begin position="1207"/>
        <end position="1215"/>
    </location>
</feature>
<feature type="strand" evidence="25">
    <location>
        <begin position="1218"/>
        <end position="1225"/>
    </location>
</feature>
<feature type="turn" evidence="25">
    <location>
        <begin position="1226"/>
        <end position="1228"/>
    </location>
</feature>
<feature type="strand" evidence="25">
    <location>
        <begin position="1231"/>
        <end position="1239"/>
    </location>
</feature>
<feature type="helix" evidence="25">
    <location>
        <begin position="1241"/>
        <end position="1254"/>
    </location>
</feature>
<feature type="strand" evidence="25">
    <location>
        <begin position="1259"/>
        <end position="1261"/>
    </location>
</feature>
<feature type="helix" evidence="25">
    <location>
        <begin position="1266"/>
        <end position="1268"/>
    </location>
</feature>
<feature type="helix" evidence="25">
    <location>
        <begin position="1271"/>
        <end position="1280"/>
    </location>
</feature>
<feature type="strand" evidence="25">
    <location>
        <begin position="1283"/>
        <end position="1286"/>
    </location>
</feature>
<feature type="turn" evidence="25">
    <location>
        <begin position="1293"/>
        <end position="1295"/>
    </location>
</feature>
<feature type="helix" evidence="25">
    <location>
        <begin position="1296"/>
        <end position="1312"/>
    </location>
</feature>
<feature type="helix" evidence="25">
    <location>
        <begin position="1313"/>
        <end position="1315"/>
    </location>
</feature>
<feature type="helix" evidence="25">
    <location>
        <begin position="1319"/>
        <end position="1332"/>
    </location>
</feature>
<feature type="helix" evidence="25">
    <location>
        <begin position="1343"/>
        <end position="1355"/>
    </location>
</feature>
<comment type="function">
    <molecule>Gag-Pol polyprotein</molecule>
    <text evidence="1">Mediates, with Gag polyprotein, the essential events in virion assembly, including binding the plasma membrane, making the protein-protein interactions necessary to create spherical particles, recruiting the viral Env proteins, and packaging the genomic RNA via direct interactions with the RNA packaging sequence (Psi). Gag-Pol polyprotein may regulate its own translation, by the binding genomic RNA in the 5'-UTR. At low concentration, the polyprotein would promote translation, whereas at high concentration, the polyprotein would encapsidate genomic RNA and then shut off translation.</text>
</comment>
<comment type="function">
    <molecule>Matrix protein p17</molecule>
    <text evidence="7">Targets the polyprotein to the plasma membrane via a multipartite membrane-binding signal, that includes its myristoylated N-terminus. Matrix protein is part of the pre-integration complex. Implicated in the release from host cell mediated by Vpu. Binds to RNA.</text>
</comment>
<comment type="function">
    <molecule>Capsid protein p24</molecule>
    <text evidence="5 7">Forms the conical core that encapsulates the genomic RNA-nucleocapsid complex in the virion. Most core are conical, with only 7% tubular. The core is constituted by capsid protein hexamer subunits. The core is disassembled soon after virion entry (By similarity). Host restriction factors such as TRIM5-alpha or TRIMCyp bind retroviral capsids and cause premature capsid disassembly, leading to blocks in reverse transcription. Capsid restriction by TRIM5 is one of the factors which restricts HIV-1 to the human species. Host PIN1 apparently facilitates the virion uncoating. On the other hand, interactions with PDZD8 or CYPA stabilize the capsid.</text>
</comment>
<comment type="function">
    <molecule>Nucleocapsid protein p7</molecule>
    <text evidence="5">Encapsulates and protects viral dimeric unspliced genomic RNA (gRNA). Binds these RNAs through its zinc fingers. Acts as a nucleic acid chaperone which is involved in rearangement of nucleic acid secondary structure during gRNA retrotranscription. Also facilitates template switch leading to recombination. As part of the polyprotein, participates in gRNA dimerization, packaging, tRNA incorporation and virion assembly.</text>
</comment>
<comment type="function">
    <molecule>Protease</molecule>
    <text evidence="5 10">Aspartyl protease that mediates proteolytic cleavages of Gag and Gag-Pol polyproteins during or shortly after the release of the virion from the plasma membrane. Cleavages take place as an ordered, step-wise cascade to yield mature proteins. This process is called maturation. Displays maximal activity during the budding process just prior to particle release from the cell. Also cleaves Nef and Vif, probably concomitantly with viral structural proteins on maturation of virus particles. Hydrolyzes host EIF4GI and PABP1 in order to shut off the capped cellular mRNA translation. The resulting inhibition of cellular protein synthesis serves to ensure maximal viral gene expression and to evade host immune response. Also mediates cleavage of host YTHDF3. Mediates cleavage of host CARD8, thereby activating the CARD8 inflammasome, leading to the clearance of latent HIV-1 in patient CD4(+) T-cells after viral reactivation; in contrast, HIV-1 can evade CARD8-sensing when its protease remains inactive in infected cells prior to viral budding (By similarity).</text>
</comment>
<comment type="function">
    <molecule>Reverse transcriptase/ribonuclease H</molecule>
    <text evidence="5">Multifunctional enzyme that converts the viral RNA genome into dsDNA in the cytoplasm, shortly after virus entry into the cell. This enzyme displays a DNA polymerase activity that can copy either DNA or RNA templates, and a ribonuclease H (RNase H) activity that cleaves the RNA strand of RNA-DNA heteroduplexes in a partially processive 3' to 5' endonucleasic mode. Conversion of viral genomic RNA into dsDNA requires many steps. A tRNA(3)-Lys binds to the primer-binding site (PBS) situated at the 5'-end of the viral RNA. RT uses the 3' end of the tRNA primer to perform a short round of RNA-dependent minus-strand DNA synthesis. The reading proceeds through the U5 region and ends after the repeated (R) region which is present at both ends of viral RNA. The portion of the RNA-DNA heteroduplex is digested by the RNase H, resulting in a ssDNA product attached to the tRNA primer. This ssDNA/tRNA hybridizes with the identical R region situated at the 3' end of viral RNA. This template exchange, known as minus-strand DNA strong stop transfer, can be either intra- or intermolecular. RT uses the 3' end of this newly synthesized short ssDNA to perform the RNA-dependent minus-strand DNA synthesis of the whole template. RNase H digests the RNA template except for two polypurine tracts (PPTs) situated at the 5'-end and near the center of the genome. It is not clear if both polymerase and RNase H activities are simultaneous. RNase H probably can proceed both in a polymerase-dependent (RNA cut into small fragments by the same RT performing DNA synthesis) and a polymerase-independent mode (cleavage of remaining RNA fragments by free RTs). Secondly, RT performs DNA-directed plus-strand DNA synthesis using the PPTs that have not been removed by RNase H as primers. PPTs and tRNA primers are then removed by RNase H. The 3' and 5' ssDNA PBS regions hybridize to form a circular dsDNA intermediate. Strand displacement synthesis by RT to the PBS and PPT ends produces a blunt ended, linear dsDNA copy of the viral genome that includes long terminal repeats (LTRs) at both ends.</text>
</comment>
<comment type="function">
    <molecule>Integrase</molecule>
    <text evidence="5">Catalyzes viral DNA integration into the host chromosome, by performing a series of DNA cutting and joining reactions. This enzyme activity takes place after virion entry into a cell and reverse transcription of the RNA genome in dsDNA. The first step in the integration process is 3' processing. This step requires a complex comprising the viral genome, matrix protein, Vpr and integrase. This complex is called the pre-integration complex (PIC). The integrase protein removes 2 nucleotides from each 3' end of the viral DNA, leaving recessed CA OH's at the 3' ends. In the second step, the PIC enters cell nucleus. This process is mediated through integrase and Vpr proteins, and allows the virus to infect a non dividing cell. This ability to enter the nucleus is specific of lentiviruses, other retroviruses cannot and rely on cell division to access cell chromosomes. In the third step, termed strand transfer, the integrase protein joins the previously processed 3' ends to the 5' ends of strands of target cellular DNA at the site of integration. The 5'-ends are produced by integrase-catalyzed staggered cuts, 5 bp apart. A Y-shaped, gapped, recombination intermediate results, with the 5'-ends of the viral DNA strands and the 3' ends of target DNA strands remaining unjoined, flanking a gap of 5 bp. The last step is viral DNA integration into host chromosome. This involves host DNA repair synthesis in which the 5 bp gaps between the unjoined strands are filled in and then ligated. Since this process occurs at both cuts flanking the HIV genome, a 5 bp duplication of host DNA is produced at the ends of HIV-1 integration. Alternatively, Integrase may catalyze the excision of viral DNA just after strand transfer, this is termed disintegration.</text>
</comment>
<comment type="catalytic activity">
    <reaction evidence="10">
        <text>Specific for a P1 residue that is hydrophobic, and P1' variable, but often Pro.</text>
        <dbReference type="EC" id="3.4.23.16"/>
    </reaction>
</comment>
<comment type="catalytic activity">
    <reaction evidence="1">
        <text>Endohydrolysis of RNA in RNA/DNA hybrids. Three different cleavage modes: 1. sequence-specific internal cleavage of RNA. Human immunodeficiency virus type 1 and Moloney murine leukemia virus enzymes prefer to cleave the RNA strand one nucleotide away from the RNA-DNA junction. 2. RNA 5'-end directed cleavage 13-19 nucleotides from the RNA end. 3. DNA 3'-end directed cleavage 15-20 nucleotides away from the primer terminus.</text>
        <dbReference type="EC" id="3.1.26.13"/>
    </reaction>
</comment>
<comment type="catalytic activity">
    <reaction evidence="1">
        <text>3'-end directed exonucleolytic cleavage of viral RNA-DNA hybrid.</text>
        <dbReference type="EC" id="3.1.13.2"/>
    </reaction>
</comment>
<comment type="catalytic activity">
    <reaction evidence="11">
        <text>DNA(n) + a 2'-deoxyribonucleoside 5'-triphosphate = DNA(n+1) + diphosphate</text>
        <dbReference type="Rhea" id="RHEA:22508"/>
        <dbReference type="Rhea" id="RHEA-COMP:17339"/>
        <dbReference type="Rhea" id="RHEA-COMP:17340"/>
        <dbReference type="ChEBI" id="CHEBI:33019"/>
        <dbReference type="ChEBI" id="CHEBI:61560"/>
        <dbReference type="ChEBI" id="CHEBI:173112"/>
        <dbReference type="EC" id="2.7.7.49"/>
    </reaction>
</comment>
<comment type="catalytic activity">
    <reaction evidence="11">
        <text>DNA(n) + a 2'-deoxyribonucleoside 5'-triphosphate = DNA(n+1) + diphosphate</text>
        <dbReference type="Rhea" id="RHEA:22508"/>
        <dbReference type="Rhea" id="RHEA-COMP:17339"/>
        <dbReference type="Rhea" id="RHEA-COMP:17340"/>
        <dbReference type="ChEBI" id="CHEBI:33019"/>
        <dbReference type="ChEBI" id="CHEBI:61560"/>
        <dbReference type="ChEBI" id="CHEBI:173112"/>
        <dbReference type="EC" id="2.7.7.7"/>
    </reaction>
</comment>
<comment type="cofactor">
    <cofactor evidence="1">
        <name>Mg(2+)</name>
        <dbReference type="ChEBI" id="CHEBI:18420"/>
    </cofactor>
    <text evidence="1">Binds 2 magnesium ions for reverse transcriptase polymerase activity.</text>
</comment>
<comment type="cofactor">
    <cofactor evidence="1">
        <name>Mg(2+)</name>
        <dbReference type="ChEBI" id="CHEBI:18420"/>
    </cofactor>
    <text evidence="1">Binds 2 magnesium ions for ribonuclease H (RNase H) activity. Substrate-binding is a precondition for magnesium binding.</text>
</comment>
<comment type="cofactor">
    <cofactor evidence="1">
        <name>Mg(2+)</name>
        <dbReference type="ChEBI" id="CHEBI:18420"/>
    </cofactor>
    <text evidence="1">Magnesium ions are required for integrase activity. Binds at least 1, maybe 2 magnesium ions.</text>
</comment>
<comment type="activity regulation">
    <text evidence="1">Protease: The viral protease is inhibited by many synthetic protease inhibitors (PIs), such as amprenavir, atazanavir, indinavir, loprinavir, nelfinavir, ritonavir and saquinavir. Use of protease inhibitors in tritherapy regimens permit more ambitious therapeutic strategies. Reverse transcriptase/ribonuclease H: RT can be inhibited either by nucleoside RT inhibitors (NRTIs) or by non nucleoside RT inhibitors (NNRTIs). NRTIs act as chain terminators, whereas NNRTIs inhibit DNA polymerization by binding a small hydrophobic pocket near the RT active site and inducing an allosteric change in this region. Classical NRTIs are abacavir, adefovir (PMEA), didanosine (ddI), lamivudine (3TC), stavudine (d4T), tenofovir (PMPA), zalcitabine (ddC), and zidovudine (AZT). Classical NNRTIs are atevirdine (BHAP U-87201E), delavirdine, efavirenz (DMP-266), emivirine (I-EBU), and nevirapine (BI-RG-587). The tritherapies used as a basic effective treatment of AIDS associate two NRTIs and one NNRTI.</text>
</comment>
<comment type="subunit">
    <molecule>Matrix protein p17</molecule>
    <text evidence="5 7">Homotrimer; further assembles as hexamers of trimers (By similarity). Interacts with gp41 (via C-terminus) (By similarity). Interacts with host CALM1; this interaction induces a conformational change in the Matrix protein, triggering exposure of the myristate group (By similarity). Interacts with host AP3D1; this interaction allows the polyprotein trafficking to multivesicular bodies during virus assembly (By similarity). Part of the pre-integration complex (PIC) which is composed of viral genome, matrix protein, Vpr and integrase (By similarity).</text>
</comment>
<comment type="subunit">
    <molecule>Capsid protein p24</molecule>
    <text evidence="5 7">Homodimer; the homodimer further multimerizes as homohexamers or homopentamers. Interacts with human PPIA/CYPA (By similarity); This interaction stabilizes the capsid. Interacts with human NUP153 (By similarity). Interacts with host PDZD8; this interaction stabilizes the capsid (By similarity). Interacts with monkey TRIM5; this interaction destabilizes the capsid (By similarity).</text>
</comment>
<comment type="subunit">
    <molecule>Protease</molecule>
    <text evidence="5 7">Homodimer, whose active site consists of two apposed aspartic acid residues.</text>
</comment>
<comment type="subunit">
    <molecule>Reverse transcriptase/ribonuclease H</molecule>
    <text evidence="3">Heterodimer of p66 RT and p51 RT (RT p66/p51) (By similarity). Heterodimerization of RT is essential for DNA polymerase activity (By similarity). The overall folding of the subdomains is similar in p66 RT and p51 RT but the spatial arrangements of the subdomains are dramatically different (By similarity).</text>
</comment>
<comment type="subunit">
    <molecule>Integrase</molecule>
    <text evidence="4 5 7">Homotetramer; may further associate as a homohexadecamer (By similarity). Part of the pre-integration complex (PIC) which is composed of viral genome, matrix protein, Vpr and integrase. Interacts with human SMARCB1/INI1 and human PSIP1/LEDGF isoform 1. Interacts with human KPNA3; this interaction might play a role in nuclear import of the pre-integration complex (By similarity). Interacts with human NUP153; this interaction might play a role in nuclear import of the pre-integration complex (By similarity).</text>
</comment>
<comment type="subcellular location">
    <molecule>Gag-Pol polyprotein</molecule>
    <subcellularLocation>
        <location>Host cell membrane</location>
        <topology>Lipid-anchor</topology>
    </subcellularLocation>
    <subcellularLocation>
        <location>Host endosome</location>
        <location>Host multivesicular body</location>
    </subcellularLocation>
    <text evidence="7">These locations are linked to virus assembly sites. The main location is the cell membrane, but under some circumstances, late endosomal compartments can serve as productive sites for virion assembly.</text>
</comment>
<comment type="subcellular location">
    <molecule>Matrix protein p17</molecule>
    <subcellularLocation>
        <location>Virion membrane</location>
        <topology evidence="18">Lipid-anchor</topology>
    </subcellularLocation>
    <subcellularLocation>
        <location evidence="1">Host nucleus</location>
    </subcellularLocation>
    <subcellularLocation>
        <location evidence="1">Host cytoplasm</location>
    </subcellularLocation>
</comment>
<comment type="subcellular location">
    <molecule>Capsid protein p24</molecule>
    <subcellularLocation>
        <location evidence="18">Virion</location>
    </subcellularLocation>
</comment>
<comment type="subcellular location">
    <molecule>Nucleocapsid protein p7</molecule>
    <subcellularLocation>
        <location evidence="18">Virion</location>
    </subcellularLocation>
</comment>
<comment type="subcellular location">
    <molecule>Reverse transcriptase/ribonuclease H</molecule>
    <subcellularLocation>
        <location evidence="18">Virion</location>
    </subcellularLocation>
</comment>
<comment type="subcellular location">
    <molecule>Integrase</molecule>
    <subcellularLocation>
        <location evidence="18">Virion</location>
    </subcellularLocation>
    <subcellularLocation>
        <location evidence="18">Host nucleus</location>
    </subcellularLocation>
    <subcellularLocation>
        <location evidence="18">Host cytoplasm</location>
    </subcellularLocation>
    <text evidence="18">Nuclear at initial phase, cytoplasmic at assembly.</text>
</comment>
<comment type="alternative products">
    <event type="ribosomal frameshifting"/>
    <isoform>
        <id>P0C6F2-1</id>
        <name>Gag-Pol polyprotein</name>
        <sequence type="displayed"/>
    </isoform>
    <isoform>
        <id>Q70622-1</id>
        <name>Gag polyprotein</name>
        <sequence type="external"/>
    </isoform>
    <text>Translation results in the formation of the Gag polyprotein most of the time. Ribosomal frameshifting at the gag-pol genes boundary occurs at low frequency and produces the Gag-Pol polyprotein. This strategy of translation probably allows the virus to modulate the quantity of each viral protein. Maintenance of a correct Gag to Gag-Pol ratio is essential for RNA dimerization and viral infectivity.</text>
</comment>
<comment type="domain">
    <molecule>Reverse transcriptase/ribonuclease H</molecule>
    <text evidence="1">RT is structured in five subdomains: finger, palm, thumb, connection and RNase H. Within the palm subdomain, the 'primer grip' region is thought to be involved in the positioning of the primer terminus for accommodating the incoming nucleotide. The RNase H domain stabilizes the association of RT with primer-template.</text>
</comment>
<comment type="domain">
    <molecule>Reverse transcriptase/ribonuclease H</molecule>
    <text evidence="1">The tryptophan repeat motif is involved in RT p66/p51 dimerization (By similarity).</text>
</comment>
<comment type="domain">
    <molecule>Integrase</molecule>
    <text evidence="1">The core domain contains the D-x(n)-D-x(35)-E motif, named for the phylogenetically conserved glutamic acid and aspartic acid residues and the invariant 35 amino acid spacing between the second and third acidic residues. Each acidic residue of the D,D(35)E motif is independently essential for the 3'-processing and strand transfer activities of purified integrase protein.</text>
</comment>
<comment type="PTM">
    <molecule>Gag-Pol polyprotein</molecule>
    <text evidence="5 11">Specific enzymatic cleavages by the viral protease yield mature proteins. The protease is released by autocatalytic cleavage. The polyprotein is cleaved during and after budding, this process is termed maturation. Proteolytic cleavage of p66 RT removes the RNase H domain to yield the p51 RT subunit. Nucleocapsid protein p7 might be further cleaved after virus entry.</text>
</comment>
<comment type="PTM">
    <molecule>Matrix protein p17</molecule>
    <text evidence="5">Tyrosine phosphorylated presumably in the virion by a host kinase. Phosphorylation is apparently not a major regulator of membrane association.</text>
</comment>
<comment type="PTM">
    <molecule>Capsid protein p24</molecule>
    <text evidence="6">Phosphorylated possibly by host MAPK1; this phosphorylation is necessary for Pin1-mediated virion uncoating.</text>
</comment>
<comment type="PTM">
    <molecule>Nucleocapsid protein p7</molecule>
    <text evidence="2">Methylated by host PRMT6, impairing its function by reducing RNA annealing and the initiation of reverse transcription.</text>
</comment>
<comment type="miscellaneous">
    <molecule>Reverse transcriptase/ribonuclease H</molecule>
    <text evidence="1">Error-prone enzyme that lacks a proof-reading function. High mutations rate is a direct consequence of this characteristic. RT also displays frequent template switching leading to high recombination rate. Recombination mostly occurs between homologous regions of the two copackaged RNA genomes. If these two RNA molecules derive from different viral strains, reverse transcription will give rise to highly recombinated proviral DNAs.</text>
</comment>
<comment type="miscellaneous">
    <text>HIV-1 lineages are divided in three main groups, M (for Major), O (for Outlier), and N (for New, or Non-M, Non-O). The vast majority of strains found worldwide belong to the group M. Group O seems to be endemic to and largely confined to Cameroon and neighboring countries in West Central Africa, where these viruses represent a small minority of HIV-1 strains. The group N is represented by a limited number of isolates from Cameroonian persons. The group M is further subdivided in 9 clades or subtypes (A to D, F to H, J and K).</text>
</comment>
<comment type="miscellaneous">
    <text>Resistance to inhibitors associated with mutations are observed both in viral protease and in reverse transcriptase. Most of the time, single mutations confer only a modest reduction in drug susceptibility. Combination of several mutations is usually required to develop a high-level drug resistance. These mutations are predominantly found in clade B viruses and not in other genotypes. They are listed in the clade B representative isolate HXB2 (AC P04585).</text>
</comment>
<comment type="miscellaneous">
    <molecule>Isoform Gag-Pol polyprotein</molecule>
    <text>Produced by -1 ribosomal frameshifting.</text>
</comment>
<comment type="online information" name="HIV drug resistance mutations">
    <link uri="https://www.iasusa.org/hiv-drug-resistance/hiv-drug-resistance-mutations/"/>
</comment>
<comment type="online information" name="hivdb">
    <link uri="https://hivdb.stanford.edu"/>
    <text>HIV drug resistance database</text>
</comment>
<protein>
    <recommendedName>
        <fullName>Gag-Pol polyprotein</fullName>
    </recommendedName>
    <alternativeName>
        <fullName>Pr160Gag-Pol</fullName>
    </alternativeName>
    <component>
        <recommendedName>
            <fullName>Matrix protein p17</fullName>
            <shortName>MA</shortName>
        </recommendedName>
    </component>
    <component>
        <recommendedName>
            <fullName>Capsid protein p24</fullName>
            <shortName>CA</shortName>
        </recommendedName>
    </component>
    <component>
        <recommendedName>
            <fullName evidence="7">Spacer peptide 1</fullName>
            <shortName>SP1</shortName>
        </recommendedName>
        <alternativeName>
            <fullName>p2</fullName>
        </alternativeName>
    </component>
    <component>
        <recommendedName>
            <fullName>Nucleocapsid protein p7</fullName>
            <shortName>NC</shortName>
        </recommendedName>
    </component>
    <component>
        <recommendedName>
            <fullName>Transframe peptide</fullName>
            <shortName>TF</shortName>
        </recommendedName>
    </component>
    <component>
        <recommendedName>
            <fullName>p6-pol</fullName>
            <shortName>p6*</shortName>
        </recommendedName>
    </component>
    <component>
        <recommendedName>
            <fullName>Protease</fullName>
            <ecNumber>3.4.23.16</ecNumber>
        </recommendedName>
        <alternativeName>
            <fullName>PR</fullName>
        </alternativeName>
        <alternativeName>
            <fullName>Retropepsin</fullName>
        </alternativeName>
    </component>
    <component>
        <recommendedName>
            <fullName>Reverse transcriptase/ribonuclease H</fullName>
            <ecNumber>2.7.7.49</ecNumber>
            <ecNumber>2.7.7.7</ecNumber>
            <ecNumber>3.1.26.13</ecNumber>
        </recommendedName>
        <alternativeName>
            <fullName>Exoribonuclease H</fullName>
            <ecNumber>3.1.13.2</ecNumber>
        </alternativeName>
        <alternativeName>
            <fullName>p66 RT</fullName>
        </alternativeName>
    </component>
    <component>
        <recommendedName>
            <fullName>p51 RT</fullName>
        </recommendedName>
    </component>
    <component>
        <recommendedName>
            <fullName>p15</fullName>
        </recommendedName>
    </component>
    <component>
        <recommendedName>
            <fullName>Integrase</fullName>
            <shortName>IN</shortName>
            <ecNumber evidence="5">2.7.7.-</ecNumber>
            <ecNumber evidence="5">3.1.-.-</ecNumber>
        </recommendedName>
    </component>
</protein>
<gene>
    <name type="primary">gag-pol</name>
</gene>
<evidence type="ECO:0000250" key="1"/>
<evidence type="ECO:0000250" key="2">
    <source>
        <dbReference type="UniProtKB" id="P03347"/>
    </source>
</evidence>
<evidence type="ECO:0000250" key="3">
    <source>
        <dbReference type="UniProtKB" id="P03366"/>
    </source>
</evidence>
<evidence type="ECO:0000250" key="4">
    <source>
        <dbReference type="UniProtKB" id="P03367"/>
    </source>
</evidence>
<evidence type="ECO:0000250" key="5">
    <source>
        <dbReference type="UniProtKB" id="P04585"/>
    </source>
</evidence>
<evidence type="ECO:0000250" key="6">
    <source>
        <dbReference type="UniProtKB" id="P12493"/>
    </source>
</evidence>
<evidence type="ECO:0000250" key="7">
    <source>
        <dbReference type="UniProtKB" id="P12497"/>
    </source>
</evidence>
<evidence type="ECO:0000255" key="8"/>
<evidence type="ECO:0000255" key="9">
    <source>
        <dbReference type="PROSITE-ProRule" id="PRU00047"/>
    </source>
</evidence>
<evidence type="ECO:0000255" key="10">
    <source>
        <dbReference type="PROSITE-ProRule" id="PRU00275"/>
    </source>
</evidence>
<evidence type="ECO:0000255" key="11">
    <source>
        <dbReference type="PROSITE-ProRule" id="PRU00405"/>
    </source>
</evidence>
<evidence type="ECO:0000255" key="12">
    <source>
        <dbReference type="PROSITE-ProRule" id="PRU00408"/>
    </source>
</evidence>
<evidence type="ECO:0000255" key="13">
    <source>
        <dbReference type="PROSITE-ProRule" id="PRU00450"/>
    </source>
</evidence>
<evidence type="ECO:0000255" key="14">
    <source>
        <dbReference type="PROSITE-ProRule" id="PRU00457"/>
    </source>
</evidence>
<evidence type="ECO:0000255" key="15">
    <source>
        <dbReference type="PROSITE-ProRule" id="PRU00506"/>
    </source>
</evidence>
<evidence type="ECO:0000255" key="16">
    <source>
        <dbReference type="PROSITE-ProRule" id="PRU10094"/>
    </source>
</evidence>
<evidence type="ECO:0000256" key="17">
    <source>
        <dbReference type="SAM" id="MobiDB-lite"/>
    </source>
</evidence>
<evidence type="ECO:0000305" key="18"/>
<evidence type="ECO:0000305" key="19">
    <source>
    </source>
</evidence>
<evidence type="ECO:0007744" key="20">
    <source>
        <dbReference type="PDB" id="3LP3"/>
    </source>
</evidence>
<evidence type="ECO:0007744" key="21">
    <source>
        <dbReference type="PDB" id="3TH9"/>
    </source>
</evidence>
<evidence type="ECO:0007829" key="22">
    <source>
        <dbReference type="PDB" id="3LP3"/>
    </source>
</evidence>
<evidence type="ECO:0007829" key="23">
    <source>
        <dbReference type="PDB" id="4MC1"/>
    </source>
</evidence>
<evidence type="ECO:0007829" key="24">
    <source>
        <dbReference type="PDB" id="4MC9"/>
    </source>
</evidence>
<evidence type="ECO:0007829" key="25">
    <source>
        <dbReference type="PDB" id="4NYF"/>
    </source>
</evidence>
<evidence type="ECO:0007829" key="26">
    <source>
        <dbReference type="PDB" id="5K14"/>
    </source>
</evidence>
<evidence type="ECO:0007829" key="27">
    <source>
        <dbReference type="PDB" id="9JA0"/>
    </source>
</evidence>